<comment type="function">
    <text evidence="1">Transfers the gamma-phosphate of ATP to the 4'-position of a tetraacyldisaccharide 1-phosphate intermediate (termed DS-1-P) to form tetraacyldisaccharide 1,4'-bis-phosphate (lipid IVA).</text>
</comment>
<comment type="catalytic activity">
    <reaction evidence="1">
        <text>a lipid A disaccharide + ATP = a lipid IVA + ADP + H(+)</text>
        <dbReference type="Rhea" id="RHEA:67840"/>
        <dbReference type="ChEBI" id="CHEBI:15378"/>
        <dbReference type="ChEBI" id="CHEBI:30616"/>
        <dbReference type="ChEBI" id="CHEBI:176343"/>
        <dbReference type="ChEBI" id="CHEBI:176425"/>
        <dbReference type="ChEBI" id="CHEBI:456216"/>
        <dbReference type="EC" id="2.7.1.130"/>
    </reaction>
</comment>
<comment type="pathway">
    <text evidence="1">Glycolipid biosynthesis; lipid IV(A) biosynthesis; lipid IV(A) from (3R)-3-hydroxytetradecanoyl-[acyl-carrier-protein] and UDP-N-acetyl-alpha-D-glucosamine: step 6/6.</text>
</comment>
<comment type="similarity">
    <text evidence="1">Belongs to the LpxK family.</text>
</comment>
<reference key="1">
    <citation type="journal article" date="2008" name="Appl. Environ. Microbiol.">
        <title>The genome of Polaromonas sp. strain JS666: insights into the evolution of a hydrocarbon- and xenobiotic-degrading bacterium, and features of relevance to biotechnology.</title>
        <authorList>
            <person name="Mattes T.E."/>
            <person name="Alexander A.K."/>
            <person name="Richardson P.M."/>
            <person name="Munk A.C."/>
            <person name="Han C.S."/>
            <person name="Stothard P."/>
            <person name="Coleman N.V."/>
        </authorList>
    </citation>
    <scope>NUCLEOTIDE SEQUENCE [LARGE SCALE GENOMIC DNA]</scope>
    <source>
        <strain>JS666 / ATCC BAA-500</strain>
    </source>
</reference>
<organism>
    <name type="scientific">Polaromonas sp. (strain JS666 / ATCC BAA-500)</name>
    <dbReference type="NCBI Taxonomy" id="296591"/>
    <lineage>
        <taxon>Bacteria</taxon>
        <taxon>Pseudomonadati</taxon>
        <taxon>Pseudomonadota</taxon>
        <taxon>Betaproteobacteria</taxon>
        <taxon>Burkholderiales</taxon>
        <taxon>Comamonadaceae</taxon>
        <taxon>Polaromonas</taxon>
    </lineage>
</organism>
<evidence type="ECO:0000255" key="1">
    <source>
        <dbReference type="HAMAP-Rule" id="MF_00409"/>
    </source>
</evidence>
<dbReference type="EC" id="2.7.1.130" evidence="1"/>
<dbReference type="EMBL" id="CP000316">
    <property type="protein sequence ID" value="ABE44863.1"/>
    <property type="molecule type" value="Genomic_DNA"/>
</dbReference>
<dbReference type="SMR" id="Q129C9"/>
<dbReference type="STRING" id="296591.Bpro_2949"/>
<dbReference type="KEGG" id="pol:Bpro_2949"/>
<dbReference type="eggNOG" id="COG1663">
    <property type="taxonomic scope" value="Bacteria"/>
</dbReference>
<dbReference type="HOGENOM" id="CLU_038816_2_0_4"/>
<dbReference type="UniPathway" id="UPA00359">
    <property type="reaction ID" value="UER00482"/>
</dbReference>
<dbReference type="Proteomes" id="UP000001983">
    <property type="component" value="Chromosome"/>
</dbReference>
<dbReference type="GO" id="GO:0005886">
    <property type="term" value="C:plasma membrane"/>
    <property type="evidence" value="ECO:0007669"/>
    <property type="project" value="TreeGrafter"/>
</dbReference>
<dbReference type="GO" id="GO:0005524">
    <property type="term" value="F:ATP binding"/>
    <property type="evidence" value="ECO:0007669"/>
    <property type="project" value="UniProtKB-UniRule"/>
</dbReference>
<dbReference type="GO" id="GO:0009029">
    <property type="term" value="F:tetraacyldisaccharide 4'-kinase activity"/>
    <property type="evidence" value="ECO:0007669"/>
    <property type="project" value="UniProtKB-UniRule"/>
</dbReference>
<dbReference type="GO" id="GO:0009245">
    <property type="term" value="P:lipid A biosynthetic process"/>
    <property type="evidence" value="ECO:0007669"/>
    <property type="project" value="UniProtKB-UniRule"/>
</dbReference>
<dbReference type="GO" id="GO:0009244">
    <property type="term" value="P:lipopolysaccharide core region biosynthetic process"/>
    <property type="evidence" value="ECO:0007669"/>
    <property type="project" value="TreeGrafter"/>
</dbReference>
<dbReference type="HAMAP" id="MF_00409">
    <property type="entry name" value="LpxK"/>
    <property type="match status" value="1"/>
</dbReference>
<dbReference type="InterPro" id="IPR003758">
    <property type="entry name" value="LpxK"/>
</dbReference>
<dbReference type="InterPro" id="IPR027417">
    <property type="entry name" value="P-loop_NTPase"/>
</dbReference>
<dbReference type="NCBIfam" id="TIGR00682">
    <property type="entry name" value="lpxK"/>
    <property type="match status" value="1"/>
</dbReference>
<dbReference type="PANTHER" id="PTHR42724">
    <property type="entry name" value="TETRAACYLDISACCHARIDE 4'-KINASE"/>
    <property type="match status" value="1"/>
</dbReference>
<dbReference type="PANTHER" id="PTHR42724:SF1">
    <property type="entry name" value="TETRAACYLDISACCHARIDE 4'-KINASE, MITOCHONDRIAL-RELATED"/>
    <property type="match status" value="1"/>
</dbReference>
<dbReference type="Pfam" id="PF02606">
    <property type="entry name" value="LpxK"/>
    <property type="match status" value="1"/>
</dbReference>
<dbReference type="SUPFAM" id="SSF52540">
    <property type="entry name" value="P-loop containing nucleoside triphosphate hydrolases"/>
    <property type="match status" value="1"/>
</dbReference>
<keyword id="KW-0067">ATP-binding</keyword>
<keyword id="KW-0418">Kinase</keyword>
<keyword id="KW-0441">Lipid A biosynthesis</keyword>
<keyword id="KW-0444">Lipid biosynthesis</keyword>
<keyword id="KW-0443">Lipid metabolism</keyword>
<keyword id="KW-0547">Nucleotide-binding</keyword>
<keyword id="KW-1185">Reference proteome</keyword>
<keyword id="KW-0808">Transferase</keyword>
<sequence length="338" mass="35925">MRTWLTRGWLARLLWPLAQLHGQAVRLRRALYRSGILESCRFGVPVIVAGNVVAGGAGKTPLVMALVRHLQAQGLQVGVVSRGYGRSSHESLEVSIGTPVAQSGDEPALIKRATNAPVFVAKKRADAVRRLLATYPSTAVVVCDDGLQHYALQRDIEIAVFDDRGVGNGWLLPAGPLREPWPGRRQQGLDLVLHTGLKPAFEGFTSGRQLADHAIAADGSQIALTALRGRTLVALAGIANPEAFFAMLRARGLVLEQTLSLPDHHDFGAGDLAACAGKTVLCTEKDAVKLFGKPGLASLQLLAVPLVFSPEPAFFAALDALLAPLLSQLPSGHGYQTA</sequence>
<proteinExistence type="inferred from homology"/>
<accession>Q129C9</accession>
<name>LPXK_POLSJ</name>
<feature type="chain" id="PRO_0000291223" description="Tetraacyldisaccharide 4'-kinase">
    <location>
        <begin position="1"/>
        <end position="338"/>
    </location>
</feature>
<feature type="binding site" evidence="1">
    <location>
        <begin position="53"/>
        <end position="60"/>
    </location>
    <ligand>
        <name>ATP</name>
        <dbReference type="ChEBI" id="CHEBI:30616"/>
    </ligand>
</feature>
<gene>
    <name evidence="1" type="primary">lpxK</name>
    <name type="ordered locus">Bpro_2949</name>
</gene>
<protein>
    <recommendedName>
        <fullName evidence="1">Tetraacyldisaccharide 4'-kinase</fullName>
        <ecNumber evidence="1">2.7.1.130</ecNumber>
    </recommendedName>
    <alternativeName>
        <fullName evidence="1">Lipid A 4'-kinase</fullName>
    </alternativeName>
</protein>